<dbReference type="EC" id="4.2.1.49" evidence="1"/>
<dbReference type="EMBL" id="CP001172">
    <property type="protein sequence ID" value="ACJ56837.1"/>
    <property type="molecule type" value="Genomic_DNA"/>
</dbReference>
<dbReference type="SMR" id="B7GUU5"/>
<dbReference type="HOGENOM" id="CLU_018868_0_1_6"/>
<dbReference type="UniPathway" id="UPA00379">
    <property type="reaction ID" value="UER00550"/>
</dbReference>
<dbReference type="Proteomes" id="UP000006924">
    <property type="component" value="Chromosome"/>
</dbReference>
<dbReference type="GO" id="GO:0005737">
    <property type="term" value="C:cytoplasm"/>
    <property type="evidence" value="ECO:0007669"/>
    <property type="project" value="UniProtKB-SubCell"/>
</dbReference>
<dbReference type="GO" id="GO:0016153">
    <property type="term" value="F:urocanate hydratase activity"/>
    <property type="evidence" value="ECO:0007669"/>
    <property type="project" value="UniProtKB-UniRule"/>
</dbReference>
<dbReference type="GO" id="GO:0019556">
    <property type="term" value="P:L-histidine catabolic process to glutamate and formamide"/>
    <property type="evidence" value="ECO:0007669"/>
    <property type="project" value="UniProtKB-UniPathway"/>
</dbReference>
<dbReference type="GO" id="GO:0019557">
    <property type="term" value="P:L-histidine catabolic process to glutamate and formate"/>
    <property type="evidence" value="ECO:0007669"/>
    <property type="project" value="UniProtKB-UniPathway"/>
</dbReference>
<dbReference type="FunFam" id="3.40.50.10730:FF:000001">
    <property type="entry name" value="Urocanate hydratase"/>
    <property type="match status" value="1"/>
</dbReference>
<dbReference type="Gene3D" id="3.40.50.10730">
    <property type="entry name" value="Urocanase like domains"/>
    <property type="match status" value="1"/>
</dbReference>
<dbReference type="Gene3D" id="3.40.1770.10">
    <property type="entry name" value="Urocanase superfamily"/>
    <property type="match status" value="1"/>
</dbReference>
<dbReference type="HAMAP" id="MF_00577">
    <property type="entry name" value="HutU"/>
    <property type="match status" value="1"/>
</dbReference>
<dbReference type="InterPro" id="IPR055351">
    <property type="entry name" value="Urocanase"/>
</dbReference>
<dbReference type="InterPro" id="IPR023637">
    <property type="entry name" value="Urocanase-like"/>
</dbReference>
<dbReference type="InterPro" id="IPR035401">
    <property type="entry name" value="Urocanase_C"/>
</dbReference>
<dbReference type="InterPro" id="IPR038364">
    <property type="entry name" value="Urocanase_central_sf"/>
</dbReference>
<dbReference type="InterPro" id="IPR023636">
    <property type="entry name" value="Urocanase_CS"/>
</dbReference>
<dbReference type="InterPro" id="IPR035400">
    <property type="entry name" value="Urocanase_N"/>
</dbReference>
<dbReference type="InterPro" id="IPR035085">
    <property type="entry name" value="Urocanase_Rossmann-like"/>
</dbReference>
<dbReference type="InterPro" id="IPR036190">
    <property type="entry name" value="Urocanase_sf"/>
</dbReference>
<dbReference type="NCBIfam" id="TIGR01228">
    <property type="entry name" value="hutU"/>
    <property type="match status" value="1"/>
</dbReference>
<dbReference type="NCBIfam" id="NF003820">
    <property type="entry name" value="PRK05414.1"/>
    <property type="match status" value="1"/>
</dbReference>
<dbReference type="PANTHER" id="PTHR12216">
    <property type="entry name" value="UROCANATE HYDRATASE"/>
    <property type="match status" value="1"/>
</dbReference>
<dbReference type="PANTHER" id="PTHR12216:SF4">
    <property type="entry name" value="UROCANATE HYDRATASE"/>
    <property type="match status" value="1"/>
</dbReference>
<dbReference type="Pfam" id="PF01175">
    <property type="entry name" value="Urocanase"/>
    <property type="match status" value="1"/>
</dbReference>
<dbReference type="Pfam" id="PF17392">
    <property type="entry name" value="Urocanase_C"/>
    <property type="match status" value="1"/>
</dbReference>
<dbReference type="Pfam" id="PF17391">
    <property type="entry name" value="Urocanase_N"/>
    <property type="match status" value="1"/>
</dbReference>
<dbReference type="PIRSF" id="PIRSF001423">
    <property type="entry name" value="Urocanate_hydrat"/>
    <property type="match status" value="1"/>
</dbReference>
<dbReference type="SUPFAM" id="SSF111326">
    <property type="entry name" value="Urocanase"/>
    <property type="match status" value="1"/>
</dbReference>
<dbReference type="PROSITE" id="PS01233">
    <property type="entry name" value="UROCANASE"/>
    <property type="match status" value="1"/>
</dbReference>
<organism>
    <name type="scientific">Acinetobacter baumannii (strain AB307-0294)</name>
    <dbReference type="NCBI Taxonomy" id="557600"/>
    <lineage>
        <taxon>Bacteria</taxon>
        <taxon>Pseudomonadati</taxon>
        <taxon>Pseudomonadota</taxon>
        <taxon>Gammaproteobacteria</taxon>
        <taxon>Moraxellales</taxon>
        <taxon>Moraxellaceae</taxon>
        <taxon>Acinetobacter</taxon>
        <taxon>Acinetobacter calcoaceticus/baumannii complex</taxon>
    </lineage>
</organism>
<feature type="chain" id="PRO_1000129551" description="Urocanate hydratase">
    <location>
        <begin position="1"/>
        <end position="558"/>
    </location>
</feature>
<feature type="active site" evidence="1">
    <location>
        <position position="412"/>
    </location>
</feature>
<feature type="binding site" evidence="1">
    <location>
        <begin position="54"/>
        <end position="55"/>
    </location>
    <ligand>
        <name>NAD(+)</name>
        <dbReference type="ChEBI" id="CHEBI:57540"/>
    </ligand>
</feature>
<feature type="binding site" evidence="1">
    <location>
        <position position="132"/>
    </location>
    <ligand>
        <name>NAD(+)</name>
        <dbReference type="ChEBI" id="CHEBI:57540"/>
    </ligand>
</feature>
<feature type="binding site" evidence="1">
    <location>
        <begin position="178"/>
        <end position="180"/>
    </location>
    <ligand>
        <name>NAD(+)</name>
        <dbReference type="ChEBI" id="CHEBI:57540"/>
    </ligand>
</feature>
<feature type="binding site" evidence="1">
    <location>
        <position position="198"/>
    </location>
    <ligand>
        <name>NAD(+)</name>
        <dbReference type="ChEBI" id="CHEBI:57540"/>
    </ligand>
</feature>
<feature type="binding site" evidence="1">
    <location>
        <begin position="244"/>
        <end position="245"/>
    </location>
    <ligand>
        <name>NAD(+)</name>
        <dbReference type="ChEBI" id="CHEBI:57540"/>
    </ligand>
</feature>
<feature type="binding site" evidence="1">
    <location>
        <begin position="265"/>
        <end position="269"/>
    </location>
    <ligand>
        <name>NAD(+)</name>
        <dbReference type="ChEBI" id="CHEBI:57540"/>
    </ligand>
</feature>
<feature type="binding site" evidence="1">
    <location>
        <begin position="275"/>
        <end position="276"/>
    </location>
    <ligand>
        <name>NAD(+)</name>
        <dbReference type="ChEBI" id="CHEBI:57540"/>
    </ligand>
</feature>
<feature type="binding site" evidence="1">
    <location>
        <position position="324"/>
    </location>
    <ligand>
        <name>NAD(+)</name>
        <dbReference type="ChEBI" id="CHEBI:57540"/>
    </ligand>
</feature>
<feature type="binding site" evidence="1">
    <location>
        <position position="494"/>
    </location>
    <ligand>
        <name>NAD(+)</name>
        <dbReference type="ChEBI" id="CHEBI:57540"/>
    </ligand>
</feature>
<evidence type="ECO:0000255" key="1">
    <source>
        <dbReference type="HAMAP-Rule" id="MF_00577"/>
    </source>
</evidence>
<protein>
    <recommendedName>
        <fullName evidence="1">Urocanate hydratase</fullName>
        <shortName evidence="1">Urocanase</shortName>
        <ecNumber evidence="1">4.2.1.49</ecNumber>
    </recommendedName>
    <alternativeName>
        <fullName evidence="1">Imidazolonepropionate hydrolase</fullName>
    </alternativeName>
</protein>
<sequence length="558" mass="61233">MTTMTTKFRDVEIRAPRGTELTAKSWLTEAPLRMLMNNLDPDVAENPKELVVYGGIGRAARNWECFDKIVDTLKNLETDETLLVQSGKPVGVFKTHKDAPRVLIANSNLVPHWANWEHFNELDAKALAMYGQMTAGSWIYIGSQGIVQGTYETFVEAGRQHYNGDLKGRWVLTAGLGGMGGAQPLAATLAGACSLNIECQQASIDFRLRTRYVDEQATDLDDALARIDRYTKEGKAISIALHGNAAEILPELVRRGVRPDMVTDQTSAHDPLNGYLPVGWTWDEYRERAKKEPEAVVKAAKQSMAKHVQAMLDFQKMGVPTFDYGNNIRQMAKEEGVANAFDFPGFVPAYIRPLFCRGIGPFRWAALSGDPEDIYKTDAKVKELIPDDEHLHHWLDMARERISFQGLPARICWVGLGLRAKLGLAFNEMVRSGELSAPIVIGRDHLDSGSVASPNRETEAMQDGSDAVSDWPLLNALLNTAGGATWVSLHHGGGVGMGFSQHSGVVIVCDGTDEAAARIARVLTNDPATGVMRHADAGYEIAINCAKEQGLHLPMITQ</sequence>
<name>HUTU_ACIB3</name>
<accession>B7GUU5</accession>
<keyword id="KW-0963">Cytoplasm</keyword>
<keyword id="KW-0369">Histidine metabolism</keyword>
<keyword id="KW-0456">Lyase</keyword>
<keyword id="KW-0520">NAD</keyword>
<comment type="function">
    <text evidence="1">Catalyzes the conversion of urocanate to 4-imidazolone-5-propionate.</text>
</comment>
<comment type="catalytic activity">
    <reaction evidence="1">
        <text>4-imidazolone-5-propanoate = trans-urocanate + H2O</text>
        <dbReference type="Rhea" id="RHEA:13101"/>
        <dbReference type="ChEBI" id="CHEBI:15377"/>
        <dbReference type="ChEBI" id="CHEBI:17771"/>
        <dbReference type="ChEBI" id="CHEBI:77893"/>
        <dbReference type="EC" id="4.2.1.49"/>
    </reaction>
</comment>
<comment type="cofactor">
    <cofactor evidence="1">
        <name>NAD(+)</name>
        <dbReference type="ChEBI" id="CHEBI:57540"/>
    </cofactor>
    <text evidence="1">Binds 1 NAD(+) per subunit.</text>
</comment>
<comment type="pathway">
    <text evidence="1">Amino-acid degradation; L-histidine degradation into L-glutamate; N-formimidoyl-L-glutamate from L-histidine: step 2/3.</text>
</comment>
<comment type="subcellular location">
    <subcellularLocation>
        <location evidence="1">Cytoplasm</location>
    </subcellularLocation>
</comment>
<comment type="similarity">
    <text evidence="1">Belongs to the urocanase family.</text>
</comment>
<reference key="1">
    <citation type="journal article" date="2008" name="J. Bacteriol.">
        <title>Comparative genome sequence analysis of multidrug-resistant Acinetobacter baumannii.</title>
        <authorList>
            <person name="Adams M.D."/>
            <person name="Goglin K."/>
            <person name="Molyneaux N."/>
            <person name="Hujer K.M."/>
            <person name="Lavender H."/>
            <person name="Jamison J.J."/>
            <person name="MacDonald I.J."/>
            <person name="Martin K.M."/>
            <person name="Russo T."/>
            <person name="Campagnari A.A."/>
            <person name="Hujer A.M."/>
            <person name="Bonomo R.A."/>
            <person name="Gill S.R."/>
        </authorList>
    </citation>
    <scope>NUCLEOTIDE SEQUENCE [LARGE SCALE GENOMIC DNA]</scope>
    <source>
        <strain>AB307-0294</strain>
    </source>
</reference>
<proteinExistence type="inferred from homology"/>
<gene>
    <name evidence="1" type="primary">hutU</name>
    <name type="ordered locus">ABBFA_000076</name>
</gene>